<name>ISPE_STAS1</name>
<keyword id="KW-0067">ATP-binding</keyword>
<keyword id="KW-0418">Kinase</keyword>
<keyword id="KW-0547">Nucleotide-binding</keyword>
<keyword id="KW-1185">Reference proteome</keyword>
<keyword id="KW-0808">Transferase</keyword>
<sequence length="282" mass="31067">MIYETAPAKINLTLDTLFKRDDGFHEVEMIMTTIDLNDRLSFELRKDKKIVVDVEQTYVPSDNKNLAYKAAELMKKTYNLQQGLTITIDKNIPVSAGLAGGSTDAAATMRGMNRLYKLNRPLEELCALGIQIGTDIPFCILGKTALCKGKGEIIEYLDKPPSAWVVVAKPDLGISSPDIFKKLDLTQPHTVHTEACENALISGDYEQLCKSLSNRLEPVSGKMHDEILKIKANMLENGADGAVMSGSGPTVYALARKERQARHIYNAVNGCCNEVHIVRLLG</sequence>
<proteinExistence type="inferred from homology"/>
<comment type="function">
    <text evidence="1">Catalyzes the phosphorylation of the position 2 hydroxy group of 4-diphosphocytidyl-2C-methyl-D-erythritol.</text>
</comment>
<comment type="catalytic activity">
    <reaction evidence="1">
        <text>4-CDP-2-C-methyl-D-erythritol + ATP = 4-CDP-2-C-methyl-D-erythritol 2-phosphate + ADP + H(+)</text>
        <dbReference type="Rhea" id="RHEA:18437"/>
        <dbReference type="ChEBI" id="CHEBI:15378"/>
        <dbReference type="ChEBI" id="CHEBI:30616"/>
        <dbReference type="ChEBI" id="CHEBI:57823"/>
        <dbReference type="ChEBI" id="CHEBI:57919"/>
        <dbReference type="ChEBI" id="CHEBI:456216"/>
        <dbReference type="EC" id="2.7.1.148"/>
    </reaction>
</comment>
<comment type="similarity">
    <text evidence="1">Belongs to the GHMP kinase family. IspE subfamily.</text>
</comment>
<accession>Q49V04</accession>
<feature type="chain" id="PRO_0000235137" description="Putative 4-diphosphocytidyl-2-C-methyl-D-erythritol kinase">
    <location>
        <begin position="1"/>
        <end position="282"/>
    </location>
</feature>
<feature type="active site" evidence="1">
    <location>
        <position position="9"/>
    </location>
</feature>
<feature type="active site" evidence="1">
    <location>
        <position position="135"/>
    </location>
</feature>
<feature type="binding site" evidence="1">
    <location>
        <begin position="93"/>
        <end position="103"/>
    </location>
    <ligand>
        <name>ATP</name>
        <dbReference type="ChEBI" id="CHEBI:30616"/>
    </ligand>
</feature>
<evidence type="ECO:0000255" key="1">
    <source>
        <dbReference type="HAMAP-Rule" id="MF_00061"/>
    </source>
</evidence>
<gene>
    <name type="ordered locus">SSP2261</name>
</gene>
<dbReference type="EC" id="2.7.1.148" evidence="1"/>
<dbReference type="EMBL" id="AP008934">
    <property type="protein sequence ID" value="BAE19406.1"/>
    <property type="molecule type" value="Genomic_DNA"/>
</dbReference>
<dbReference type="SMR" id="Q49V04"/>
<dbReference type="GeneID" id="3615649"/>
<dbReference type="KEGG" id="ssp:SSP2261"/>
<dbReference type="PATRIC" id="fig|342451.11.peg.2252"/>
<dbReference type="eggNOG" id="COG1947">
    <property type="taxonomic scope" value="Bacteria"/>
</dbReference>
<dbReference type="HOGENOM" id="CLU_053057_1_1_9"/>
<dbReference type="OrthoDB" id="9809438at2"/>
<dbReference type="Proteomes" id="UP000006371">
    <property type="component" value="Chromosome"/>
</dbReference>
<dbReference type="GO" id="GO:0050515">
    <property type="term" value="F:4-(cytidine 5'-diphospho)-2-C-methyl-D-erythritol kinase activity"/>
    <property type="evidence" value="ECO:0007669"/>
    <property type="project" value="UniProtKB-UniRule"/>
</dbReference>
<dbReference type="GO" id="GO:0005524">
    <property type="term" value="F:ATP binding"/>
    <property type="evidence" value="ECO:0007669"/>
    <property type="project" value="UniProtKB-UniRule"/>
</dbReference>
<dbReference type="GO" id="GO:0016114">
    <property type="term" value="P:terpenoid biosynthetic process"/>
    <property type="evidence" value="ECO:0007669"/>
    <property type="project" value="InterPro"/>
</dbReference>
<dbReference type="FunFam" id="3.30.230.10:FF:000029">
    <property type="entry name" value="4-diphosphocytidyl-2-C-methyl-D-erythritol kinase"/>
    <property type="match status" value="1"/>
</dbReference>
<dbReference type="Gene3D" id="3.30.230.10">
    <property type="match status" value="1"/>
</dbReference>
<dbReference type="Gene3D" id="3.30.70.890">
    <property type="entry name" value="GHMP kinase, C-terminal domain"/>
    <property type="match status" value="1"/>
</dbReference>
<dbReference type="HAMAP" id="MF_00061">
    <property type="entry name" value="IspE"/>
    <property type="match status" value="1"/>
</dbReference>
<dbReference type="InterPro" id="IPR013750">
    <property type="entry name" value="GHMP_kinase_C_dom"/>
</dbReference>
<dbReference type="InterPro" id="IPR036554">
    <property type="entry name" value="GHMP_kinase_C_sf"/>
</dbReference>
<dbReference type="InterPro" id="IPR006204">
    <property type="entry name" value="GHMP_kinase_N_dom"/>
</dbReference>
<dbReference type="InterPro" id="IPR004424">
    <property type="entry name" value="IspE"/>
</dbReference>
<dbReference type="InterPro" id="IPR020568">
    <property type="entry name" value="Ribosomal_Su5_D2-typ_SF"/>
</dbReference>
<dbReference type="InterPro" id="IPR014721">
    <property type="entry name" value="Ribsml_uS5_D2-typ_fold_subgr"/>
</dbReference>
<dbReference type="NCBIfam" id="TIGR00154">
    <property type="entry name" value="ispE"/>
    <property type="match status" value="1"/>
</dbReference>
<dbReference type="PANTHER" id="PTHR43527">
    <property type="entry name" value="4-DIPHOSPHOCYTIDYL-2-C-METHYL-D-ERYTHRITOL KINASE, CHLOROPLASTIC"/>
    <property type="match status" value="1"/>
</dbReference>
<dbReference type="PANTHER" id="PTHR43527:SF2">
    <property type="entry name" value="4-DIPHOSPHOCYTIDYL-2-C-METHYL-D-ERYTHRITOL KINASE, CHLOROPLASTIC"/>
    <property type="match status" value="1"/>
</dbReference>
<dbReference type="Pfam" id="PF08544">
    <property type="entry name" value="GHMP_kinases_C"/>
    <property type="match status" value="1"/>
</dbReference>
<dbReference type="Pfam" id="PF00288">
    <property type="entry name" value="GHMP_kinases_N"/>
    <property type="match status" value="1"/>
</dbReference>
<dbReference type="PIRSF" id="PIRSF010376">
    <property type="entry name" value="IspE"/>
    <property type="match status" value="1"/>
</dbReference>
<dbReference type="SUPFAM" id="SSF55060">
    <property type="entry name" value="GHMP Kinase, C-terminal domain"/>
    <property type="match status" value="1"/>
</dbReference>
<dbReference type="SUPFAM" id="SSF54211">
    <property type="entry name" value="Ribosomal protein S5 domain 2-like"/>
    <property type="match status" value="1"/>
</dbReference>
<protein>
    <recommendedName>
        <fullName evidence="1">Putative 4-diphosphocytidyl-2-C-methyl-D-erythritol kinase</fullName>
        <shortName evidence="1">CMK</shortName>
        <ecNumber evidence="1">2.7.1.148</ecNumber>
    </recommendedName>
    <alternativeName>
        <fullName evidence="1">4-(cytidine-5'-diphospho)-2-C-methyl-D-erythritol kinase</fullName>
    </alternativeName>
</protein>
<reference key="1">
    <citation type="journal article" date="2005" name="Proc. Natl. Acad. Sci. U.S.A.">
        <title>Whole genome sequence of Staphylococcus saprophyticus reveals the pathogenesis of uncomplicated urinary tract infection.</title>
        <authorList>
            <person name="Kuroda M."/>
            <person name="Yamashita A."/>
            <person name="Hirakawa H."/>
            <person name="Kumano M."/>
            <person name="Morikawa K."/>
            <person name="Higashide M."/>
            <person name="Maruyama A."/>
            <person name="Inose Y."/>
            <person name="Matoba K."/>
            <person name="Toh H."/>
            <person name="Kuhara S."/>
            <person name="Hattori M."/>
            <person name="Ohta T."/>
        </authorList>
    </citation>
    <scope>NUCLEOTIDE SEQUENCE [LARGE SCALE GENOMIC DNA]</scope>
    <source>
        <strain>ATCC 15305 / DSM 20229 / NCIMB 8711 / NCTC 7292 / S-41</strain>
    </source>
</reference>
<organism>
    <name type="scientific">Staphylococcus saprophyticus subsp. saprophyticus (strain ATCC 15305 / DSM 20229 / NCIMB 8711 / NCTC 7292 / S-41)</name>
    <dbReference type="NCBI Taxonomy" id="342451"/>
    <lineage>
        <taxon>Bacteria</taxon>
        <taxon>Bacillati</taxon>
        <taxon>Bacillota</taxon>
        <taxon>Bacilli</taxon>
        <taxon>Bacillales</taxon>
        <taxon>Staphylococcaceae</taxon>
        <taxon>Staphylococcus</taxon>
    </lineage>
</organism>